<keyword id="KW-0002">3D-structure</keyword>
<keyword id="KW-0007">Acetylation</keyword>
<keyword id="KW-0009">Actin-binding</keyword>
<keyword id="KW-0514">Muscle protein</keyword>
<keyword id="KW-0597">Phosphoprotein</keyword>
<keyword id="KW-1185">Reference proteome</keyword>
<protein>
    <recommendedName>
        <fullName>Troponin I, cardiac muscle</fullName>
    </recommendedName>
    <alternativeName>
        <fullName>Cardiac troponin I</fullName>
    </alternativeName>
</protein>
<organism>
    <name type="scientific">Mus musculus</name>
    <name type="common">Mouse</name>
    <dbReference type="NCBI Taxonomy" id="10090"/>
    <lineage>
        <taxon>Eukaryota</taxon>
        <taxon>Metazoa</taxon>
        <taxon>Chordata</taxon>
        <taxon>Craniata</taxon>
        <taxon>Vertebrata</taxon>
        <taxon>Euteleostomi</taxon>
        <taxon>Mammalia</taxon>
        <taxon>Eutheria</taxon>
        <taxon>Euarchontoglires</taxon>
        <taxon>Glires</taxon>
        <taxon>Rodentia</taxon>
        <taxon>Myomorpha</taxon>
        <taxon>Muroidea</taxon>
        <taxon>Muridae</taxon>
        <taxon>Murinae</taxon>
        <taxon>Mus</taxon>
        <taxon>Mus</taxon>
    </lineage>
</organism>
<feature type="initiator methionine" description="Removed" evidence="2">
    <location>
        <position position="1"/>
    </location>
</feature>
<feature type="chain" id="PRO_0000186153" description="Troponin I, cardiac muscle">
    <location>
        <begin position="2"/>
        <end position="211"/>
    </location>
</feature>
<feature type="region of interest" description="Disordered" evidence="4">
    <location>
        <begin position="1"/>
        <end position="24"/>
    </location>
</feature>
<feature type="region of interest" description="Involved in binding TNC">
    <location>
        <begin position="33"/>
        <end position="80"/>
    </location>
</feature>
<feature type="region of interest" description="Involved in binding TNC and actin">
    <location>
        <begin position="130"/>
        <end position="151"/>
    </location>
</feature>
<feature type="site" description="Involved in TNI-TNT interactions">
    <location>
        <position position="81"/>
    </location>
</feature>
<feature type="site" description="Involved in TNI-TNT interactions">
    <location>
        <position position="98"/>
    </location>
</feature>
<feature type="modified residue" description="N-acetylalanine" evidence="2">
    <location>
        <position position="2"/>
    </location>
</feature>
<feature type="modified residue" description="Phosphoserine" evidence="3">
    <location>
        <position position="5"/>
    </location>
</feature>
<feature type="modified residue" description="Phosphoserine" evidence="3">
    <location>
        <position position="6"/>
    </location>
</feature>
<feature type="modified residue" description="Phosphoserine; by PKA and PKD/PRKD1" evidence="6">
    <location>
        <position position="23"/>
    </location>
</feature>
<feature type="modified residue" description="Phosphoserine; by PKA and PKD/PRKD1" evidence="6">
    <location>
        <position position="24"/>
    </location>
</feature>
<feature type="modified residue" description="Phosphotyrosine" evidence="3">
    <location>
        <position position="27"/>
    </location>
</feature>
<feature type="modified residue" description="Phosphothreonine; by STK4/MST1" evidence="3">
    <location>
        <position position="32"/>
    </location>
</feature>
<feature type="modified residue" description="Phosphoserine; by PKC/PRKCE" evidence="5">
    <location>
        <position position="43"/>
    </location>
</feature>
<feature type="modified residue" description="Phosphoserine; by PKC/PRKCE" evidence="5">
    <location>
        <position position="45"/>
    </location>
</feature>
<feature type="modified residue" description="Phosphothreonine; by STK4/MST1" evidence="3">
    <location>
        <position position="52"/>
    </location>
</feature>
<feature type="modified residue" description="Phosphothreonine" evidence="3">
    <location>
        <position position="79"/>
    </location>
</feature>
<feature type="modified residue" description="Phosphothreonine; by STK4/MST1" evidence="3">
    <location>
        <position position="130"/>
    </location>
</feature>
<feature type="modified residue" description="Phosphothreonine; by STK4/MST1" evidence="3">
    <location>
        <position position="144"/>
    </location>
</feature>
<feature type="modified residue" description="Phosphoserine" evidence="3">
    <location>
        <position position="151"/>
    </location>
</feature>
<feature type="modified residue" description="Phosphoserine" evidence="3">
    <location>
        <position position="167"/>
    </location>
</feature>
<feature type="modified residue" description="Phosphoserine" evidence="8">
    <location>
        <position position="200"/>
    </location>
</feature>
<feature type="helix" evidence="9">
    <location>
        <begin position="6"/>
        <end position="9"/>
    </location>
</feature>
<feature type="helix" evidence="9">
    <location>
        <begin position="24"/>
        <end position="31"/>
    </location>
</feature>
<comment type="function">
    <text>Troponin I is the inhibitory subunit of troponin, the thin filament regulatory complex which confers calcium-sensitivity to striated muscle actomyosin ATPase activity.</text>
</comment>
<comment type="subunit">
    <text evidence="1">Interacts with TRIM63 (By similarity). Binds to actin and tropomyosin. Interacts with STK4/MST1 (By similarity).</text>
</comment>
<comment type="PTM">
    <text evidence="1 5 6">Phosphorylated at Ser-23 and Ser-24 by PRKD1; phosphorylation reduces myofilament calcium sensitivity. Phosphorylated preferentially at Thr-32. Phosphorylation by STK4/MST1 alters its binding affinity to TNNC1 (cardiac Tn-C) and TNNT2 (cardiac Tn-T) (By similarity). Phosphorylated at Ser-43 and Ser-45 by PRKCE; phosphorylation increases myocardium contractile dysfunction.</text>
</comment>
<comment type="similarity">
    <text evidence="7">Belongs to the troponin I family.</text>
</comment>
<name>TNNI3_MOUSE</name>
<sequence>MADESSDAAGEPQPAPAPVRRRSSANYRAYATEPHAKKKSKISASRKLQLKTLMLQIAKQEMEREAEERRGEKGRVLRTRCQPLELDGLGFEELQDLCRQLHARVDKVDEERYDVEAKVTKNITEIADLTQKIYDLRGKFKRPTLRRVRISADAMMQALLGTRAKESLDLRAHLKQVKKEDIEKENREVGDWRKNIDALSGMEGRKKKFEG</sequence>
<reference key="1">
    <citation type="journal article" date="1994" name="J. Biol. Chem.">
        <title>Structure and regulation of the mouse cardiac troponin I gene.</title>
        <authorList>
            <person name="Ausoni S."/>
            <person name="Campione M."/>
            <person name="Picard A."/>
            <person name="Moretti P."/>
            <person name="Vittadello M."/>
            <person name="de Nardi C."/>
            <person name="Schiaffino S."/>
        </authorList>
    </citation>
    <scope>NUCLEOTIDE SEQUENCE [GENOMIC DNA]</scope>
</reference>
<reference key="2">
    <citation type="journal article" date="1994" name="J. Biol. Chem.">
        <title>Mutagenesis of cardiac troponin I. Role of the unique NH2-terminal peptide in myofilament activation.</title>
        <authorList>
            <person name="Guo X."/>
            <person name="Wattanapermpool J."/>
            <person name="Palmiter K.A."/>
            <person name="Murphy A.M."/>
            <person name="Solaro R.J."/>
        </authorList>
    </citation>
    <scope>NUCLEOTIDE SEQUENCE [MRNA]</scope>
    <source>
        <strain>CD-1</strain>
        <tissue>Heart</tissue>
    </source>
</reference>
<reference key="3">
    <citation type="journal article" date="2004" name="Genome Res.">
        <title>The status, quality, and expansion of the NIH full-length cDNA project: the Mammalian Gene Collection (MGC).</title>
        <authorList>
            <consortium name="The MGC Project Team"/>
        </authorList>
    </citation>
    <scope>NUCLEOTIDE SEQUENCE [LARGE SCALE MRNA]</scope>
    <source>
        <tissue>Heart</tissue>
    </source>
</reference>
<reference key="4">
    <citation type="journal article" date="2006" name="J. Mol. Cell. Cardiol.">
        <title>Partial replacement of cardiac troponin I with a non-phosphorylatable mutant at serines 43/45 attenuates the contractile dysfunction associated with PKCepsilon phosphorylation.</title>
        <authorList>
            <person name="Scruggs S.B."/>
            <person name="Walker L.A."/>
            <person name="Lyu T."/>
            <person name="Geenen D.L."/>
            <person name="Solaro R.J."/>
            <person name="Buttrick P.M."/>
            <person name="Goldspink P.H."/>
        </authorList>
    </citation>
    <scope>PHOSPHORYLATION AT SER-43 AND SER-45</scope>
</reference>
<reference key="5">
    <citation type="journal article" date="2010" name="Cell">
        <title>A tissue-specific atlas of mouse protein phosphorylation and expression.</title>
        <authorList>
            <person name="Huttlin E.L."/>
            <person name="Jedrychowski M.P."/>
            <person name="Elias J.E."/>
            <person name="Goswami T."/>
            <person name="Rad R."/>
            <person name="Beausoleil S.A."/>
            <person name="Villen J."/>
            <person name="Haas W."/>
            <person name="Sowa M.E."/>
            <person name="Gygi S.P."/>
        </authorList>
    </citation>
    <scope>PHOSPHORYLATION [LARGE SCALE ANALYSIS] AT SER-200</scope>
    <scope>IDENTIFICATION BY MASS SPECTROMETRY [LARGE SCALE ANALYSIS]</scope>
    <source>
        <tissue>Heart</tissue>
    </source>
</reference>
<reference key="6">
    <citation type="journal article" date="2007" name="J. Mol. Biol.">
        <title>Phosphorylation-dependent conformational transition of the cardiac specific N-extension of troponin I in cardiac troponin.</title>
        <authorList>
            <person name="Howarth J.W."/>
            <person name="Meller J."/>
            <person name="Solaro R.J."/>
            <person name="Trewhella J."/>
            <person name="Rosevear P.R."/>
        </authorList>
    </citation>
    <scope>STRUCTURE BY NMR OF 1-32</scope>
    <scope>PHOSPHORYLATION AT SER-23 AND SER-24</scope>
</reference>
<proteinExistence type="evidence at protein level"/>
<dbReference type="EMBL" id="Z22784">
    <property type="protein sequence ID" value="CAA80459.1"/>
    <property type="molecule type" value="Genomic_DNA"/>
</dbReference>
<dbReference type="EMBL" id="U09181">
    <property type="protein sequence ID" value="AAA19657.1"/>
    <property type="molecule type" value="mRNA"/>
</dbReference>
<dbReference type="EMBL" id="BC061171">
    <property type="protein sequence ID" value="AAH61171.1"/>
    <property type="molecule type" value="mRNA"/>
</dbReference>
<dbReference type="CCDS" id="CCDS39736.1"/>
<dbReference type="PIR" id="A53805">
    <property type="entry name" value="A53805"/>
</dbReference>
<dbReference type="RefSeq" id="NP_033432.1">
    <property type="nucleotide sequence ID" value="NM_009406.4"/>
</dbReference>
<dbReference type="PDB" id="2JPW">
    <property type="method" value="NMR"/>
    <property type="chains" value="A=1-32"/>
</dbReference>
<dbReference type="PDB" id="6KLT">
    <property type="method" value="EM"/>
    <property type="resolution" value="12.00 A"/>
    <property type="chains" value="C=49-163"/>
</dbReference>
<dbReference type="PDB" id="6KLU">
    <property type="method" value="EM"/>
    <property type="resolution" value="12.00 A"/>
    <property type="chains" value="C=50-167"/>
</dbReference>
<dbReference type="PDBsum" id="2JPW"/>
<dbReference type="PDBsum" id="6KLT"/>
<dbReference type="PDBsum" id="6KLU"/>
<dbReference type="EMDB" id="EMD-0717"/>
<dbReference type="EMDB" id="EMD-0718"/>
<dbReference type="SMR" id="P48787"/>
<dbReference type="BioGRID" id="204266">
    <property type="interactions" value="9"/>
</dbReference>
<dbReference type="ComplexPortal" id="CPX-16">
    <property type="entry name" value="Cardiac troponin complex"/>
</dbReference>
<dbReference type="CORUM" id="P48787"/>
<dbReference type="FunCoup" id="P48787">
    <property type="interactions" value="314"/>
</dbReference>
<dbReference type="IntAct" id="P48787">
    <property type="interactions" value="5"/>
</dbReference>
<dbReference type="MINT" id="P48787"/>
<dbReference type="STRING" id="10090.ENSMUSP00000096458"/>
<dbReference type="GlyGen" id="P48787">
    <property type="glycosylation" value="3 sites, 1 O-linked glycan (1 site)"/>
</dbReference>
<dbReference type="iPTMnet" id="P48787"/>
<dbReference type="PhosphoSitePlus" id="P48787"/>
<dbReference type="PaxDb" id="10090-ENSMUSP00000096458"/>
<dbReference type="ProteomicsDB" id="259143"/>
<dbReference type="Antibodypedia" id="4354">
    <property type="antibodies" value="2619 antibodies from 52 providers"/>
</dbReference>
<dbReference type="DNASU" id="21954"/>
<dbReference type="Ensembl" id="ENSMUST00000098859.10">
    <property type="protein sequence ID" value="ENSMUSP00000096458.4"/>
    <property type="gene ID" value="ENSMUSG00000035458.16"/>
</dbReference>
<dbReference type="GeneID" id="21954"/>
<dbReference type="KEGG" id="mmu:21954"/>
<dbReference type="UCSC" id="uc009exv.1">
    <property type="organism name" value="mouse"/>
</dbReference>
<dbReference type="AGR" id="MGI:98783"/>
<dbReference type="CTD" id="7137"/>
<dbReference type="MGI" id="MGI:98783">
    <property type="gene designation" value="Tnni3"/>
</dbReference>
<dbReference type="VEuPathDB" id="HostDB:ENSMUSG00000035458"/>
<dbReference type="eggNOG" id="KOG3977">
    <property type="taxonomic scope" value="Eukaryota"/>
</dbReference>
<dbReference type="GeneTree" id="ENSGT01030000234588"/>
<dbReference type="HOGENOM" id="CLU_098686_1_0_1"/>
<dbReference type="InParanoid" id="P48787"/>
<dbReference type="OMA" id="MLQVAKH"/>
<dbReference type="PhylomeDB" id="P48787"/>
<dbReference type="TreeFam" id="TF313374"/>
<dbReference type="Reactome" id="R-MMU-390522">
    <property type="pathway name" value="Striated Muscle Contraction"/>
</dbReference>
<dbReference type="Reactome" id="R-MMU-5578775">
    <property type="pathway name" value="Ion homeostasis"/>
</dbReference>
<dbReference type="BioGRID-ORCS" id="21954">
    <property type="hits" value="1 hit in 80 CRISPR screens"/>
</dbReference>
<dbReference type="ChiTaRS" id="Tnni3">
    <property type="organism name" value="mouse"/>
</dbReference>
<dbReference type="EvolutionaryTrace" id="P48787"/>
<dbReference type="PRO" id="PR:P48787"/>
<dbReference type="Proteomes" id="UP000000589">
    <property type="component" value="Chromosome 7"/>
</dbReference>
<dbReference type="RNAct" id="P48787">
    <property type="molecule type" value="protein"/>
</dbReference>
<dbReference type="Bgee" id="ENSMUSG00000035458">
    <property type="expression patterns" value="Expressed in myocardium and 114 other cell types or tissues"/>
</dbReference>
<dbReference type="ExpressionAtlas" id="P48787">
    <property type="expression patterns" value="baseline and differential"/>
</dbReference>
<dbReference type="GO" id="GO:0097512">
    <property type="term" value="C:cardiac myofibril"/>
    <property type="evidence" value="ECO:0007669"/>
    <property type="project" value="Ensembl"/>
</dbReference>
<dbReference type="GO" id="GO:1990584">
    <property type="term" value="C:cardiac Troponin complex"/>
    <property type="evidence" value="ECO:0000353"/>
    <property type="project" value="ComplexPortal"/>
</dbReference>
<dbReference type="GO" id="GO:0005737">
    <property type="term" value="C:cytoplasm"/>
    <property type="evidence" value="ECO:0000266"/>
    <property type="project" value="MGI"/>
</dbReference>
<dbReference type="GO" id="GO:0030017">
    <property type="term" value="C:sarcomere"/>
    <property type="evidence" value="ECO:0000314"/>
    <property type="project" value="MGI"/>
</dbReference>
<dbReference type="GO" id="GO:0051015">
    <property type="term" value="F:actin filament binding"/>
    <property type="evidence" value="ECO:0007669"/>
    <property type="project" value="Ensembl"/>
</dbReference>
<dbReference type="GO" id="GO:0019855">
    <property type="term" value="F:calcium channel inhibitor activity"/>
    <property type="evidence" value="ECO:0007669"/>
    <property type="project" value="Ensembl"/>
</dbReference>
<dbReference type="GO" id="GO:0048306">
    <property type="term" value="F:calcium-dependent protein binding"/>
    <property type="evidence" value="ECO:0007669"/>
    <property type="project" value="Ensembl"/>
</dbReference>
<dbReference type="GO" id="GO:0019904">
    <property type="term" value="F:protein domain specific binding"/>
    <property type="evidence" value="ECO:0007669"/>
    <property type="project" value="Ensembl"/>
</dbReference>
<dbReference type="GO" id="GO:0019901">
    <property type="term" value="F:protein kinase binding"/>
    <property type="evidence" value="ECO:0007669"/>
    <property type="project" value="Ensembl"/>
</dbReference>
<dbReference type="GO" id="GO:0030172">
    <property type="term" value="F:troponin C binding"/>
    <property type="evidence" value="ECO:0007669"/>
    <property type="project" value="Ensembl"/>
</dbReference>
<dbReference type="GO" id="GO:0031014">
    <property type="term" value="F:troponin T binding"/>
    <property type="evidence" value="ECO:0007669"/>
    <property type="project" value="Ensembl"/>
</dbReference>
<dbReference type="GO" id="GO:0060048">
    <property type="term" value="P:cardiac muscle contraction"/>
    <property type="evidence" value="ECO:0000303"/>
    <property type="project" value="ComplexPortal"/>
</dbReference>
<dbReference type="GO" id="GO:0007507">
    <property type="term" value="P:heart development"/>
    <property type="evidence" value="ECO:0000314"/>
    <property type="project" value="MGI"/>
</dbReference>
<dbReference type="GO" id="GO:0006874">
    <property type="term" value="P:intracellular calcium ion homeostasis"/>
    <property type="evidence" value="ECO:0000314"/>
    <property type="project" value="MGI"/>
</dbReference>
<dbReference type="GO" id="GO:0030049">
    <property type="term" value="P:muscle filament sliding"/>
    <property type="evidence" value="ECO:0000303"/>
    <property type="project" value="ComplexPortal"/>
</dbReference>
<dbReference type="GO" id="GO:0010882">
    <property type="term" value="P:regulation of cardiac muscle contraction by calcium ion signaling"/>
    <property type="evidence" value="ECO:0007669"/>
    <property type="project" value="Ensembl"/>
</dbReference>
<dbReference type="GO" id="GO:0006937">
    <property type="term" value="P:regulation of muscle contraction"/>
    <property type="evidence" value="ECO:0000314"/>
    <property type="project" value="MGI"/>
</dbReference>
<dbReference type="GO" id="GO:0006940">
    <property type="term" value="P:regulation of smooth muscle contraction"/>
    <property type="evidence" value="ECO:0007669"/>
    <property type="project" value="Ensembl"/>
</dbReference>
<dbReference type="GO" id="GO:0001980">
    <property type="term" value="P:regulation of systemic arterial blood pressure by ischemic conditions"/>
    <property type="evidence" value="ECO:0000315"/>
    <property type="project" value="MGI"/>
</dbReference>
<dbReference type="GO" id="GO:0006941">
    <property type="term" value="P:striated muscle contraction"/>
    <property type="evidence" value="ECO:0000314"/>
    <property type="project" value="MGI"/>
</dbReference>
<dbReference type="GO" id="GO:0001570">
    <property type="term" value="P:vasculogenesis"/>
    <property type="evidence" value="ECO:0000314"/>
    <property type="project" value="MGI"/>
</dbReference>
<dbReference type="GO" id="GO:0055010">
    <property type="term" value="P:ventricular cardiac muscle tissue morphogenesis"/>
    <property type="evidence" value="ECO:0007669"/>
    <property type="project" value="Ensembl"/>
</dbReference>
<dbReference type="FunFam" id="1.20.5.350:FF:000002">
    <property type="entry name" value="troponin I, fast skeletal muscle"/>
    <property type="match status" value="1"/>
</dbReference>
<dbReference type="Gene3D" id="1.20.5.350">
    <property type="match status" value="1"/>
</dbReference>
<dbReference type="Gene3D" id="6.10.250.180">
    <property type="match status" value="1"/>
</dbReference>
<dbReference type="InterPro" id="IPR001978">
    <property type="entry name" value="Troponin"/>
</dbReference>
<dbReference type="InterPro" id="IPR021666">
    <property type="entry name" value="Troponin-I_N"/>
</dbReference>
<dbReference type="InterPro" id="IPR050875">
    <property type="entry name" value="Troponin_I"/>
</dbReference>
<dbReference type="InterPro" id="IPR038077">
    <property type="entry name" value="Troponin_sf"/>
</dbReference>
<dbReference type="PANTHER" id="PTHR13738">
    <property type="entry name" value="TROPONIN I"/>
    <property type="match status" value="1"/>
</dbReference>
<dbReference type="PANTHER" id="PTHR13738:SF2">
    <property type="entry name" value="TROPONIN I, CARDIAC MUSCLE"/>
    <property type="match status" value="1"/>
</dbReference>
<dbReference type="Pfam" id="PF00992">
    <property type="entry name" value="Troponin"/>
    <property type="match status" value="1"/>
</dbReference>
<dbReference type="Pfam" id="PF11636">
    <property type="entry name" value="Troponin-I_N"/>
    <property type="match status" value="1"/>
</dbReference>
<dbReference type="SUPFAM" id="SSF90250">
    <property type="entry name" value="Troponin coil-coiled subunits"/>
    <property type="match status" value="1"/>
</dbReference>
<accession>P48787</accession>
<gene>
    <name type="primary">Tnni3</name>
</gene>
<evidence type="ECO:0000250" key="1"/>
<evidence type="ECO:0000250" key="2">
    <source>
        <dbReference type="UniProtKB" id="P08057"/>
    </source>
</evidence>
<evidence type="ECO:0000250" key="3">
    <source>
        <dbReference type="UniProtKB" id="P19429"/>
    </source>
</evidence>
<evidence type="ECO:0000256" key="4">
    <source>
        <dbReference type="SAM" id="MobiDB-lite"/>
    </source>
</evidence>
<evidence type="ECO:0000269" key="5">
    <source>
    </source>
</evidence>
<evidence type="ECO:0000269" key="6">
    <source>
    </source>
</evidence>
<evidence type="ECO:0000305" key="7"/>
<evidence type="ECO:0007744" key="8">
    <source>
    </source>
</evidence>
<evidence type="ECO:0007829" key="9">
    <source>
        <dbReference type="PDB" id="2JPW"/>
    </source>
</evidence>